<evidence type="ECO:0000250" key="1"/>
<evidence type="ECO:0000255" key="2">
    <source>
        <dbReference type="PROSITE-ProRule" id="PRU00114"/>
    </source>
</evidence>
<evidence type="ECO:0000305" key="3"/>
<comment type="function">
    <text>Component of the class I major histocompatibility complex (MHC). Involved in the presentation of peptide antigens to the immune system.</text>
</comment>
<comment type="subunit">
    <text>Heterodimer of an alpha chain and a beta chain. Beta-2-microglobulin is the beta-chain of major histocompatibility complex class I molecules.</text>
</comment>
<comment type="subcellular location">
    <subcellularLocation>
        <location>Secreted</location>
    </subcellularLocation>
</comment>
<comment type="similarity">
    <text evidence="3">Belongs to the beta-2-microglobulin family.</text>
</comment>
<protein>
    <recommendedName>
        <fullName>Beta-2-microglobulin</fullName>
    </recommendedName>
</protein>
<proteinExistence type="evidence at protein level"/>
<organism>
    <name type="scientific">Aotus nancymaae</name>
    <name type="common">Ma's night monkey</name>
    <dbReference type="NCBI Taxonomy" id="37293"/>
    <lineage>
        <taxon>Eukaryota</taxon>
        <taxon>Metazoa</taxon>
        <taxon>Chordata</taxon>
        <taxon>Craniata</taxon>
        <taxon>Vertebrata</taxon>
        <taxon>Euteleostomi</taxon>
        <taxon>Mammalia</taxon>
        <taxon>Eutheria</taxon>
        <taxon>Euarchontoglires</taxon>
        <taxon>Primates</taxon>
        <taxon>Haplorrhini</taxon>
        <taxon>Platyrrhini</taxon>
        <taxon>Aotidae</taxon>
        <taxon>Aotus</taxon>
    </lineage>
</organism>
<dbReference type="EMBL" id="AF042144">
    <property type="protein sequence ID" value="AAB97463.1"/>
    <property type="molecule type" value="mRNA"/>
</dbReference>
<dbReference type="EMBL" id="AF042145">
    <property type="protein sequence ID" value="AAB97464.1"/>
    <property type="molecule type" value="mRNA"/>
</dbReference>
<dbReference type="RefSeq" id="NP_001295445.1">
    <property type="nucleotide sequence ID" value="NM_001308516.1"/>
</dbReference>
<dbReference type="SMR" id="P63064"/>
<dbReference type="STRING" id="37293.ENSANAP00000029531"/>
<dbReference type="Ensembl" id="ENSANAT00000047556.1">
    <property type="protein sequence ID" value="ENSANAP00000029526.1"/>
    <property type="gene ID" value="ENSANAG00000032555.1"/>
</dbReference>
<dbReference type="GeneID" id="105710084"/>
<dbReference type="KEGG" id="anan:105710084"/>
<dbReference type="CTD" id="567"/>
<dbReference type="GeneTree" id="ENSGT00690000102227"/>
<dbReference type="OMA" id="EDVFSCR"/>
<dbReference type="OrthoDB" id="9949628at2759"/>
<dbReference type="Proteomes" id="UP000233020">
    <property type="component" value="Unplaced"/>
</dbReference>
<dbReference type="GO" id="GO:0005576">
    <property type="term" value="C:extracellular region"/>
    <property type="evidence" value="ECO:0007669"/>
    <property type="project" value="UniProtKB-SubCell"/>
</dbReference>
<dbReference type="GO" id="GO:0042612">
    <property type="term" value="C:MHC class I protein complex"/>
    <property type="evidence" value="ECO:0007669"/>
    <property type="project" value="UniProtKB-KW"/>
</dbReference>
<dbReference type="GO" id="GO:0002474">
    <property type="term" value="P:antigen processing and presentation of peptide antigen via MHC class I"/>
    <property type="evidence" value="ECO:0007669"/>
    <property type="project" value="UniProtKB-KW"/>
</dbReference>
<dbReference type="GO" id="GO:0006955">
    <property type="term" value="P:immune response"/>
    <property type="evidence" value="ECO:0007669"/>
    <property type="project" value="InterPro"/>
</dbReference>
<dbReference type="CDD" id="cd05770">
    <property type="entry name" value="IgC1_beta2m"/>
    <property type="match status" value="1"/>
</dbReference>
<dbReference type="FunFam" id="2.60.40.10:FF:001005">
    <property type="entry name" value="Beta-2-microglobulin"/>
    <property type="match status" value="1"/>
</dbReference>
<dbReference type="Gene3D" id="2.60.40.10">
    <property type="entry name" value="Immunoglobulins"/>
    <property type="match status" value="1"/>
</dbReference>
<dbReference type="InterPro" id="IPR015707">
    <property type="entry name" value="B2Microglobulin"/>
</dbReference>
<dbReference type="InterPro" id="IPR007110">
    <property type="entry name" value="Ig-like_dom"/>
</dbReference>
<dbReference type="InterPro" id="IPR036179">
    <property type="entry name" value="Ig-like_dom_sf"/>
</dbReference>
<dbReference type="InterPro" id="IPR013783">
    <property type="entry name" value="Ig-like_fold"/>
</dbReference>
<dbReference type="InterPro" id="IPR003006">
    <property type="entry name" value="Ig/MHC_CS"/>
</dbReference>
<dbReference type="InterPro" id="IPR003597">
    <property type="entry name" value="Ig_C1-set"/>
</dbReference>
<dbReference type="InterPro" id="IPR050160">
    <property type="entry name" value="MHC/Immunoglobulin"/>
</dbReference>
<dbReference type="PANTHER" id="PTHR19944:SF62">
    <property type="entry name" value="BETA-2-MICROGLOBULIN"/>
    <property type="match status" value="1"/>
</dbReference>
<dbReference type="PANTHER" id="PTHR19944">
    <property type="entry name" value="MHC CLASS II-RELATED"/>
    <property type="match status" value="1"/>
</dbReference>
<dbReference type="Pfam" id="PF07654">
    <property type="entry name" value="C1-set"/>
    <property type="match status" value="1"/>
</dbReference>
<dbReference type="SMART" id="SM00407">
    <property type="entry name" value="IGc1"/>
    <property type="match status" value="1"/>
</dbReference>
<dbReference type="SUPFAM" id="SSF48726">
    <property type="entry name" value="Immunoglobulin"/>
    <property type="match status" value="1"/>
</dbReference>
<dbReference type="PROSITE" id="PS50835">
    <property type="entry name" value="IG_LIKE"/>
    <property type="match status" value="1"/>
</dbReference>
<dbReference type="PROSITE" id="PS00290">
    <property type="entry name" value="IG_MHC"/>
    <property type="match status" value="1"/>
</dbReference>
<keyword id="KW-1015">Disulfide bond</keyword>
<keyword id="KW-0391">Immunity</keyword>
<keyword id="KW-0393">Immunoglobulin domain</keyword>
<keyword id="KW-0490">MHC I</keyword>
<keyword id="KW-1185">Reference proteome</keyword>
<keyword id="KW-0964">Secreted</keyword>
<keyword id="KW-0732">Signal</keyword>
<accession>P63064</accession>
<accession>O46570</accession>
<sequence>MARFVVVALLVLLSLSGLEAIQHAPKIQVYSRHPAENGKPNFLNCYVSGFHPSDIEVDLLKNGKKIEKVEHSDLSFSKDWSFYLLYYTEFTPNEKDEYACRVSHVTLSTPKTVKWDRNM</sequence>
<name>B2MG_AOTNA</name>
<reference key="1">
    <citation type="journal article" date="1999" name="Immunogenetics">
        <title>Residue 3 of beta2-microglobulin affects binding of class I MHC molecules by the W6/32 antibody.</title>
        <authorList>
            <person name="Ladasky J.J."/>
            <person name="Shum B.P."/>
            <person name="Canavez F."/>
            <person name="Seuanez H.N."/>
            <person name="Parham P."/>
        </authorList>
    </citation>
    <scope>NUCLEOTIDE SEQUENCE [MRNA]</scope>
    <scope>CHARACTERIZATION</scope>
    <source>
        <tissue>Blood</tissue>
    </source>
</reference>
<feature type="signal peptide" evidence="1">
    <location>
        <begin position="1"/>
        <end position="20"/>
    </location>
</feature>
<feature type="chain" id="PRO_0000018754" description="Beta-2-microglobulin">
    <location>
        <begin position="21"/>
        <end position="119"/>
    </location>
</feature>
<feature type="domain" description="Ig-like C1-type">
    <location>
        <begin position="25"/>
        <end position="114"/>
    </location>
</feature>
<feature type="disulfide bond" evidence="2">
    <location>
        <begin position="45"/>
        <end position="100"/>
    </location>
</feature>
<gene>
    <name type="primary">B2M</name>
</gene>